<gene>
    <name evidence="1" type="primary">atpC</name>
    <name type="ordered locus">SCH_3776</name>
</gene>
<name>ATPE_SALCH</name>
<organism>
    <name type="scientific">Salmonella choleraesuis (strain SC-B67)</name>
    <dbReference type="NCBI Taxonomy" id="321314"/>
    <lineage>
        <taxon>Bacteria</taxon>
        <taxon>Pseudomonadati</taxon>
        <taxon>Pseudomonadota</taxon>
        <taxon>Gammaproteobacteria</taxon>
        <taxon>Enterobacterales</taxon>
        <taxon>Enterobacteriaceae</taxon>
        <taxon>Salmonella</taxon>
    </lineage>
</organism>
<feature type="chain" id="PRO_0000265886" description="ATP synthase epsilon chain">
    <location>
        <begin position="1"/>
        <end position="139"/>
    </location>
</feature>
<accession>Q57HY0</accession>
<sequence>MAMTYHLDVVSAEQQMFSGLVEKIQVTGSEGELGIYPGHAPLLTAIKPGMIRIVKQHGHEEFIYLSGGILEVQPGSVTVLADTAIRGQDLDEARALEAKRKAEEHIKSSHGDVDYAQASAELAKAIAKLRVIELTKKAM</sequence>
<keyword id="KW-0066">ATP synthesis</keyword>
<keyword id="KW-0997">Cell inner membrane</keyword>
<keyword id="KW-1003">Cell membrane</keyword>
<keyword id="KW-0139">CF(1)</keyword>
<keyword id="KW-0375">Hydrogen ion transport</keyword>
<keyword id="KW-0406">Ion transport</keyword>
<keyword id="KW-0472">Membrane</keyword>
<keyword id="KW-0813">Transport</keyword>
<comment type="function">
    <text evidence="1">Produces ATP from ADP in the presence of a proton gradient across the membrane.</text>
</comment>
<comment type="subunit">
    <text>F-type ATPases have 2 components, CF(1) - the catalytic core - and CF(0) - the membrane proton channel. CF(1) has five subunits: alpha(3), beta(3), gamma(1), delta(1), epsilon(1). CF(0) has three main subunits: a, b and c.</text>
</comment>
<comment type="subcellular location">
    <subcellularLocation>
        <location evidence="1">Cell inner membrane</location>
        <topology evidence="1">Peripheral membrane protein</topology>
    </subcellularLocation>
</comment>
<comment type="similarity">
    <text evidence="1">Belongs to the ATPase epsilon chain family.</text>
</comment>
<evidence type="ECO:0000255" key="1">
    <source>
        <dbReference type="HAMAP-Rule" id="MF_00530"/>
    </source>
</evidence>
<reference key="1">
    <citation type="journal article" date="2005" name="Nucleic Acids Res.">
        <title>The genome sequence of Salmonella enterica serovar Choleraesuis, a highly invasive and resistant zoonotic pathogen.</title>
        <authorList>
            <person name="Chiu C.-H."/>
            <person name="Tang P."/>
            <person name="Chu C."/>
            <person name="Hu S."/>
            <person name="Bao Q."/>
            <person name="Yu J."/>
            <person name="Chou Y.-Y."/>
            <person name="Wang H.-S."/>
            <person name="Lee Y.-S."/>
        </authorList>
    </citation>
    <scope>NUCLEOTIDE SEQUENCE [LARGE SCALE GENOMIC DNA]</scope>
    <source>
        <strain>SC-B67</strain>
    </source>
</reference>
<protein>
    <recommendedName>
        <fullName evidence="1">ATP synthase epsilon chain</fullName>
    </recommendedName>
    <alternativeName>
        <fullName evidence="1">ATP synthase F1 sector epsilon subunit</fullName>
    </alternativeName>
    <alternativeName>
        <fullName evidence="1">F-ATPase epsilon subunit</fullName>
    </alternativeName>
</protein>
<dbReference type="EMBL" id="AE017220">
    <property type="protein sequence ID" value="AAX67682.1"/>
    <property type="molecule type" value="Genomic_DNA"/>
</dbReference>
<dbReference type="RefSeq" id="WP_001251971.1">
    <property type="nucleotide sequence ID" value="NC_006905.1"/>
</dbReference>
<dbReference type="SMR" id="Q57HY0"/>
<dbReference type="KEGG" id="sec:SCH_3776"/>
<dbReference type="HOGENOM" id="CLU_084338_2_0_6"/>
<dbReference type="Proteomes" id="UP000000538">
    <property type="component" value="Chromosome"/>
</dbReference>
<dbReference type="GO" id="GO:0005886">
    <property type="term" value="C:plasma membrane"/>
    <property type="evidence" value="ECO:0007669"/>
    <property type="project" value="UniProtKB-SubCell"/>
</dbReference>
<dbReference type="GO" id="GO:0045259">
    <property type="term" value="C:proton-transporting ATP synthase complex"/>
    <property type="evidence" value="ECO:0007669"/>
    <property type="project" value="UniProtKB-KW"/>
</dbReference>
<dbReference type="GO" id="GO:0005524">
    <property type="term" value="F:ATP binding"/>
    <property type="evidence" value="ECO:0007669"/>
    <property type="project" value="UniProtKB-UniRule"/>
</dbReference>
<dbReference type="GO" id="GO:0046933">
    <property type="term" value="F:proton-transporting ATP synthase activity, rotational mechanism"/>
    <property type="evidence" value="ECO:0007669"/>
    <property type="project" value="UniProtKB-UniRule"/>
</dbReference>
<dbReference type="CDD" id="cd12152">
    <property type="entry name" value="F1-ATPase_delta"/>
    <property type="match status" value="1"/>
</dbReference>
<dbReference type="FunFam" id="1.20.5.440:FF:000001">
    <property type="entry name" value="ATP synthase epsilon chain"/>
    <property type="match status" value="1"/>
</dbReference>
<dbReference type="FunFam" id="2.60.15.10:FF:000001">
    <property type="entry name" value="ATP synthase epsilon chain"/>
    <property type="match status" value="1"/>
</dbReference>
<dbReference type="Gene3D" id="1.20.5.440">
    <property type="entry name" value="ATP synthase delta/epsilon subunit, C-terminal domain"/>
    <property type="match status" value="1"/>
</dbReference>
<dbReference type="Gene3D" id="2.60.15.10">
    <property type="entry name" value="F0F1 ATP synthase delta/epsilon subunit, N-terminal"/>
    <property type="match status" value="1"/>
</dbReference>
<dbReference type="HAMAP" id="MF_00530">
    <property type="entry name" value="ATP_synth_epsil_bac"/>
    <property type="match status" value="1"/>
</dbReference>
<dbReference type="InterPro" id="IPR036794">
    <property type="entry name" value="ATP_F1_dsu/esu_C_sf"/>
</dbReference>
<dbReference type="InterPro" id="IPR001469">
    <property type="entry name" value="ATP_synth_F1_dsu/esu"/>
</dbReference>
<dbReference type="InterPro" id="IPR020546">
    <property type="entry name" value="ATP_synth_F1_dsu/esu_N"/>
</dbReference>
<dbReference type="InterPro" id="IPR020547">
    <property type="entry name" value="ATP_synth_F1_esu_C"/>
</dbReference>
<dbReference type="InterPro" id="IPR036771">
    <property type="entry name" value="ATPsynth_dsu/esu_N"/>
</dbReference>
<dbReference type="NCBIfam" id="TIGR01216">
    <property type="entry name" value="ATP_synt_epsi"/>
    <property type="match status" value="1"/>
</dbReference>
<dbReference type="NCBIfam" id="NF001847">
    <property type="entry name" value="PRK00571.1-4"/>
    <property type="match status" value="1"/>
</dbReference>
<dbReference type="PANTHER" id="PTHR13822">
    <property type="entry name" value="ATP SYNTHASE DELTA/EPSILON CHAIN"/>
    <property type="match status" value="1"/>
</dbReference>
<dbReference type="PANTHER" id="PTHR13822:SF10">
    <property type="entry name" value="ATP SYNTHASE EPSILON CHAIN, CHLOROPLASTIC"/>
    <property type="match status" value="1"/>
</dbReference>
<dbReference type="Pfam" id="PF00401">
    <property type="entry name" value="ATP-synt_DE"/>
    <property type="match status" value="1"/>
</dbReference>
<dbReference type="Pfam" id="PF02823">
    <property type="entry name" value="ATP-synt_DE_N"/>
    <property type="match status" value="1"/>
</dbReference>
<dbReference type="SUPFAM" id="SSF46604">
    <property type="entry name" value="Epsilon subunit of F1F0-ATP synthase C-terminal domain"/>
    <property type="match status" value="1"/>
</dbReference>
<dbReference type="SUPFAM" id="SSF51344">
    <property type="entry name" value="Epsilon subunit of F1F0-ATP synthase N-terminal domain"/>
    <property type="match status" value="1"/>
</dbReference>
<proteinExistence type="inferred from homology"/>